<accession>Q63S94</accession>
<gene>
    <name evidence="1" type="primary">lepA</name>
    <name type="ordered locus">BPSL2431</name>
</gene>
<keyword id="KW-0997">Cell inner membrane</keyword>
<keyword id="KW-1003">Cell membrane</keyword>
<keyword id="KW-0342">GTP-binding</keyword>
<keyword id="KW-0378">Hydrolase</keyword>
<keyword id="KW-0472">Membrane</keyword>
<keyword id="KW-0547">Nucleotide-binding</keyword>
<keyword id="KW-0648">Protein biosynthesis</keyword>
<keyword id="KW-1185">Reference proteome</keyword>
<organism>
    <name type="scientific">Burkholderia pseudomallei (strain K96243)</name>
    <dbReference type="NCBI Taxonomy" id="272560"/>
    <lineage>
        <taxon>Bacteria</taxon>
        <taxon>Pseudomonadati</taxon>
        <taxon>Pseudomonadota</taxon>
        <taxon>Betaproteobacteria</taxon>
        <taxon>Burkholderiales</taxon>
        <taxon>Burkholderiaceae</taxon>
        <taxon>Burkholderia</taxon>
        <taxon>pseudomallei group</taxon>
    </lineage>
</organism>
<name>LEPA_BURPS</name>
<comment type="function">
    <text evidence="1">Required for accurate and efficient protein synthesis under certain stress conditions. May act as a fidelity factor of the translation reaction, by catalyzing a one-codon backward translocation of tRNAs on improperly translocated ribosomes. Back-translocation proceeds from a post-translocation (POST) complex to a pre-translocation (PRE) complex, thus giving elongation factor G a second chance to translocate the tRNAs correctly. Binds to ribosomes in a GTP-dependent manner.</text>
</comment>
<comment type="catalytic activity">
    <reaction evidence="1">
        <text>GTP + H2O = GDP + phosphate + H(+)</text>
        <dbReference type="Rhea" id="RHEA:19669"/>
        <dbReference type="ChEBI" id="CHEBI:15377"/>
        <dbReference type="ChEBI" id="CHEBI:15378"/>
        <dbReference type="ChEBI" id="CHEBI:37565"/>
        <dbReference type="ChEBI" id="CHEBI:43474"/>
        <dbReference type="ChEBI" id="CHEBI:58189"/>
        <dbReference type="EC" id="3.6.5.n1"/>
    </reaction>
</comment>
<comment type="subcellular location">
    <subcellularLocation>
        <location evidence="1">Cell inner membrane</location>
        <topology evidence="1">Peripheral membrane protein</topology>
        <orientation evidence="1">Cytoplasmic side</orientation>
    </subcellularLocation>
</comment>
<comment type="similarity">
    <text evidence="1">Belongs to the TRAFAC class translation factor GTPase superfamily. Classic translation factor GTPase family. LepA subfamily.</text>
</comment>
<dbReference type="EC" id="3.6.5.n1" evidence="1"/>
<dbReference type="EMBL" id="BX571965">
    <property type="protein sequence ID" value="CAH36434.1"/>
    <property type="molecule type" value="Genomic_DNA"/>
</dbReference>
<dbReference type="RefSeq" id="WP_004193305.1">
    <property type="nucleotide sequence ID" value="NZ_CP009538.1"/>
</dbReference>
<dbReference type="RefSeq" id="YP_109023.1">
    <property type="nucleotide sequence ID" value="NC_006350.1"/>
</dbReference>
<dbReference type="SMR" id="Q63S94"/>
<dbReference type="STRING" id="272560.BPSL2431"/>
<dbReference type="GeneID" id="93061011"/>
<dbReference type="KEGG" id="bps:BPSL2431"/>
<dbReference type="PATRIC" id="fig|272560.51.peg.2959"/>
<dbReference type="eggNOG" id="COG0481">
    <property type="taxonomic scope" value="Bacteria"/>
</dbReference>
<dbReference type="Proteomes" id="UP000000605">
    <property type="component" value="Chromosome 1"/>
</dbReference>
<dbReference type="GO" id="GO:0005886">
    <property type="term" value="C:plasma membrane"/>
    <property type="evidence" value="ECO:0007669"/>
    <property type="project" value="UniProtKB-SubCell"/>
</dbReference>
<dbReference type="GO" id="GO:0005525">
    <property type="term" value="F:GTP binding"/>
    <property type="evidence" value="ECO:0007669"/>
    <property type="project" value="UniProtKB-UniRule"/>
</dbReference>
<dbReference type="GO" id="GO:0003924">
    <property type="term" value="F:GTPase activity"/>
    <property type="evidence" value="ECO:0007669"/>
    <property type="project" value="UniProtKB-UniRule"/>
</dbReference>
<dbReference type="GO" id="GO:0097216">
    <property type="term" value="F:guanosine tetraphosphate binding"/>
    <property type="evidence" value="ECO:0007669"/>
    <property type="project" value="UniProtKB-ARBA"/>
</dbReference>
<dbReference type="GO" id="GO:0043022">
    <property type="term" value="F:ribosome binding"/>
    <property type="evidence" value="ECO:0007669"/>
    <property type="project" value="UniProtKB-UniRule"/>
</dbReference>
<dbReference type="GO" id="GO:0003746">
    <property type="term" value="F:translation elongation factor activity"/>
    <property type="evidence" value="ECO:0007669"/>
    <property type="project" value="UniProtKB-UniRule"/>
</dbReference>
<dbReference type="GO" id="GO:0045727">
    <property type="term" value="P:positive regulation of translation"/>
    <property type="evidence" value="ECO:0007669"/>
    <property type="project" value="UniProtKB-UniRule"/>
</dbReference>
<dbReference type="CDD" id="cd03699">
    <property type="entry name" value="EF4_II"/>
    <property type="match status" value="1"/>
</dbReference>
<dbReference type="CDD" id="cd16260">
    <property type="entry name" value="EF4_III"/>
    <property type="match status" value="1"/>
</dbReference>
<dbReference type="CDD" id="cd01890">
    <property type="entry name" value="LepA"/>
    <property type="match status" value="1"/>
</dbReference>
<dbReference type="CDD" id="cd03709">
    <property type="entry name" value="lepA_C"/>
    <property type="match status" value="1"/>
</dbReference>
<dbReference type="FunFam" id="3.40.50.300:FF:000078">
    <property type="entry name" value="Elongation factor 4"/>
    <property type="match status" value="1"/>
</dbReference>
<dbReference type="FunFam" id="2.40.30.10:FF:000015">
    <property type="entry name" value="Translation factor GUF1, mitochondrial"/>
    <property type="match status" value="1"/>
</dbReference>
<dbReference type="FunFam" id="3.30.70.240:FF:000007">
    <property type="entry name" value="Translation factor GUF1, mitochondrial"/>
    <property type="match status" value="1"/>
</dbReference>
<dbReference type="FunFam" id="3.30.70.2570:FF:000001">
    <property type="entry name" value="Translation factor GUF1, mitochondrial"/>
    <property type="match status" value="1"/>
</dbReference>
<dbReference type="FunFam" id="3.30.70.870:FF:000004">
    <property type="entry name" value="Translation factor GUF1, mitochondrial"/>
    <property type="match status" value="1"/>
</dbReference>
<dbReference type="Gene3D" id="3.30.70.240">
    <property type="match status" value="1"/>
</dbReference>
<dbReference type="Gene3D" id="3.30.70.2570">
    <property type="entry name" value="Elongation factor 4, C-terminal domain"/>
    <property type="match status" value="1"/>
</dbReference>
<dbReference type="Gene3D" id="3.30.70.870">
    <property type="entry name" value="Elongation Factor G (Translational Gtpase), domain 3"/>
    <property type="match status" value="1"/>
</dbReference>
<dbReference type="Gene3D" id="3.40.50.300">
    <property type="entry name" value="P-loop containing nucleotide triphosphate hydrolases"/>
    <property type="match status" value="1"/>
</dbReference>
<dbReference type="Gene3D" id="2.40.30.10">
    <property type="entry name" value="Translation factors"/>
    <property type="match status" value="1"/>
</dbReference>
<dbReference type="HAMAP" id="MF_00071">
    <property type="entry name" value="LepA"/>
    <property type="match status" value="1"/>
</dbReference>
<dbReference type="InterPro" id="IPR006297">
    <property type="entry name" value="EF-4"/>
</dbReference>
<dbReference type="InterPro" id="IPR035647">
    <property type="entry name" value="EFG_III/V"/>
</dbReference>
<dbReference type="InterPro" id="IPR000640">
    <property type="entry name" value="EFG_V-like"/>
</dbReference>
<dbReference type="InterPro" id="IPR004161">
    <property type="entry name" value="EFTu-like_2"/>
</dbReference>
<dbReference type="InterPro" id="IPR031157">
    <property type="entry name" value="G_TR_CS"/>
</dbReference>
<dbReference type="InterPro" id="IPR038363">
    <property type="entry name" value="LepA_C_sf"/>
</dbReference>
<dbReference type="InterPro" id="IPR013842">
    <property type="entry name" value="LepA_CTD"/>
</dbReference>
<dbReference type="InterPro" id="IPR035654">
    <property type="entry name" value="LepA_IV"/>
</dbReference>
<dbReference type="InterPro" id="IPR027417">
    <property type="entry name" value="P-loop_NTPase"/>
</dbReference>
<dbReference type="InterPro" id="IPR005225">
    <property type="entry name" value="Small_GTP-bd"/>
</dbReference>
<dbReference type="InterPro" id="IPR000795">
    <property type="entry name" value="T_Tr_GTP-bd_dom"/>
</dbReference>
<dbReference type="InterPro" id="IPR009000">
    <property type="entry name" value="Transl_B-barrel_sf"/>
</dbReference>
<dbReference type="NCBIfam" id="TIGR01393">
    <property type="entry name" value="lepA"/>
    <property type="match status" value="1"/>
</dbReference>
<dbReference type="NCBIfam" id="TIGR00231">
    <property type="entry name" value="small_GTP"/>
    <property type="match status" value="1"/>
</dbReference>
<dbReference type="PANTHER" id="PTHR43512:SF4">
    <property type="entry name" value="TRANSLATION FACTOR GUF1 HOMOLOG, CHLOROPLASTIC"/>
    <property type="match status" value="1"/>
</dbReference>
<dbReference type="PANTHER" id="PTHR43512">
    <property type="entry name" value="TRANSLATION FACTOR GUF1-RELATED"/>
    <property type="match status" value="1"/>
</dbReference>
<dbReference type="Pfam" id="PF00679">
    <property type="entry name" value="EFG_C"/>
    <property type="match status" value="1"/>
</dbReference>
<dbReference type="Pfam" id="PF00009">
    <property type="entry name" value="GTP_EFTU"/>
    <property type="match status" value="1"/>
</dbReference>
<dbReference type="Pfam" id="PF03144">
    <property type="entry name" value="GTP_EFTU_D2"/>
    <property type="match status" value="1"/>
</dbReference>
<dbReference type="Pfam" id="PF06421">
    <property type="entry name" value="LepA_C"/>
    <property type="match status" value="1"/>
</dbReference>
<dbReference type="PRINTS" id="PR00315">
    <property type="entry name" value="ELONGATNFCT"/>
</dbReference>
<dbReference type="SMART" id="SM00838">
    <property type="entry name" value="EFG_C"/>
    <property type="match status" value="1"/>
</dbReference>
<dbReference type="SUPFAM" id="SSF54980">
    <property type="entry name" value="EF-G C-terminal domain-like"/>
    <property type="match status" value="2"/>
</dbReference>
<dbReference type="SUPFAM" id="SSF52540">
    <property type="entry name" value="P-loop containing nucleoside triphosphate hydrolases"/>
    <property type="match status" value="1"/>
</dbReference>
<dbReference type="SUPFAM" id="SSF50447">
    <property type="entry name" value="Translation proteins"/>
    <property type="match status" value="1"/>
</dbReference>
<dbReference type="PROSITE" id="PS00301">
    <property type="entry name" value="G_TR_1"/>
    <property type="match status" value="1"/>
</dbReference>
<dbReference type="PROSITE" id="PS51722">
    <property type="entry name" value="G_TR_2"/>
    <property type="match status" value="1"/>
</dbReference>
<evidence type="ECO:0000255" key="1">
    <source>
        <dbReference type="HAMAP-Rule" id="MF_00071"/>
    </source>
</evidence>
<reference key="1">
    <citation type="journal article" date="2004" name="Proc. Natl. Acad. Sci. U.S.A.">
        <title>Genomic plasticity of the causative agent of melioidosis, Burkholderia pseudomallei.</title>
        <authorList>
            <person name="Holden M.T.G."/>
            <person name="Titball R.W."/>
            <person name="Peacock S.J."/>
            <person name="Cerdeno-Tarraga A.-M."/>
            <person name="Atkins T."/>
            <person name="Crossman L.C."/>
            <person name="Pitt T."/>
            <person name="Churcher C."/>
            <person name="Mungall K.L."/>
            <person name="Bentley S.D."/>
            <person name="Sebaihia M."/>
            <person name="Thomson N.R."/>
            <person name="Bason N."/>
            <person name="Beacham I.R."/>
            <person name="Brooks K."/>
            <person name="Brown K.A."/>
            <person name="Brown N.F."/>
            <person name="Challis G.L."/>
            <person name="Cherevach I."/>
            <person name="Chillingworth T."/>
            <person name="Cronin A."/>
            <person name="Crossett B."/>
            <person name="Davis P."/>
            <person name="DeShazer D."/>
            <person name="Feltwell T."/>
            <person name="Fraser A."/>
            <person name="Hance Z."/>
            <person name="Hauser H."/>
            <person name="Holroyd S."/>
            <person name="Jagels K."/>
            <person name="Keith K.E."/>
            <person name="Maddison M."/>
            <person name="Moule S."/>
            <person name="Price C."/>
            <person name="Quail M.A."/>
            <person name="Rabbinowitsch E."/>
            <person name="Rutherford K."/>
            <person name="Sanders M."/>
            <person name="Simmonds M."/>
            <person name="Songsivilai S."/>
            <person name="Stevens K."/>
            <person name="Tumapa S."/>
            <person name="Vesaratchavest M."/>
            <person name="Whitehead S."/>
            <person name="Yeats C."/>
            <person name="Barrell B.G."/>
            <person name="Oyston P.C.F."/>
            <person name="Parkhill J."/>
        </authorList>
    </citation>
    <scope>NUCLEOTIDE SEQUENCE [LARGE SCALE GENOMIC DNA]</scope>
    <source>
        <strain>K96243</strain>
    </source>
</reference>
<protein>
    <recommendedName>
        <fullName evidence="1">Elongation factor 4</fullName>
        <shortName evidence="1">EF-4</shortName>
        <ecNumber evidence="1">3.6.5.n1</ecNumber>
    </recommendedName>
    <alternativeName>
        <fullName evidence="1">Ribosomal back-translocase LepA</fullName>
    </alternativeName>
</protein>
<proteinExistence type="inferred from homology"/>
<sequence>MDHIRNFSIIAHIDHGKSTLADRIIQLCGGLSDREMESQVLDSMDLERERGITIKAQTAALTYRARDGKVYNLNLIDTPGHVDFSYEVSRSLSACEGALLVVDASQGVEAQTVANCYTAIELGVEVVPVLNKIDLPAANPENAIAEIEDVIGIDAMDAVRCSAKTGLGVEDVLESLIAKVPPPKGDPDAPLQALIIDSWFDNYVGVVMLVRIVNGTLRPKERIKLMATDAQYAVEHVGVFTPKSRNLESLSAGQVGFIISGIKELTAAKVGDTVTHATKPAPEPLPGFKEVKPQVFAGLYPVEANQYDALRESLEKLKLNDASLQYEPEVSQALGFGFRCGFLGLLHMEIVQERLEREFDMDLITTAPTVVYEVVQSDGTTIMVENPAKMPEPARIAEIREPIVTVNLYMPQDYVGSVITLCEQKRGTQINMQYHGRQVQLTYEIPMAEIVLDFFDRLKSVSRGYASMDYEFKEYRTSDVVKVDMLINGDKVDALSIIVHRSQSQYRGREVAAKMREIIPRQMYDVAIQAAIGAHIIARENIKALRKNVLAKCYGGDITRKKKLLEKQKEGKKRMKQVGSVEIPQEAFLAILRVEDK</sequence>
<feature type="chain" id="PRO_0000176250" description="Elongation factor 4">
    <location>
        <begin position="1"/>
        <end position="597"/>
    </location>
</feature>
<feature type="domain" description="tr-type G">
    <location>
        <begin position="2"/>
        <end position="184"/>
    </location>
</feature>
<feature type="binding site" evidence="1">
    <location>
        <begin position="14"/>
        <end position="19"/>
    </location>
    <ligand>
        <name>GTP</name>
        <dbReference type="ChEBI" id="CHEBI:37565"/>
    </ligand>
</feature>
<feature type="binding site" evidence="1">
    <location>
        <begin position="131"/>
        <end position="134"/>
    </location>
    <ligand>
        <name>GTP</name>
        <dbReference type="ChEBI" id="CHEBI:37565"/>
    </ligand>
</feature>